<reference key="1">
    <citation type="journal article" date="2000" name="J. Virol.">
        <title>The genome of fowlpox virus.</title>
        <authorList>
            <person name="Afonso C.L."/>
            <person name="Tulman E.R."/>
            <person name="Lu Z."/>
            <person name="Zsak L."/>
            <person name="Kutish G.F."/>
            <person name="Rock D.L."/>
        </authorList>
    </citation>
    <scope>NUCLEOTIDE SEQUENCE [LARGE SCALE GENOMIC DNA]</scope>
</reference>
<organismHost>
    <name type="scientific">Vertebrata</name>
    <dbReference type="NCBI Taxonomy" id="7742"/>
</organismHost>
<accession>Q9J535</accession>
<sequence>MNRQSSEKLKKTCAWFIHLIASMCGTGLLGLFVTNVTLYRQIKICGNREGMSGWVQINNNCYTMVENITFDELIGHCTKHDSIIPNALDQSEVLIVSSVLGVKDHWMPFTKKSRNWFHGKLPVNIKGDGDKREELGKPRKPDKSEKCTIYYDNGIIEENCNKKHTGICFSPFF</sequence>
<gene>
    <name type="ordered locus">FPV198</name>
</gene>
<dbReference type="EMBL" id="AF198100">
    <property type="protein sequence ID" value="AAF44542.1"/>
    <property type="molecule type" value="Genomic_DNA"/>
</dbReference>
<dbReference type="RefSeq" id="NP_039161.1">
    <property type="nucleotide sequence ID" value="NC_002188.1"/>
</dbReference>
<dbReference type="SMR" id="Q9J535"/>
<dbReference type="GeneID" id="1486770"/>
<dbReference type="KEGG" id="vg:1486770"/>
<dbReference type="Proteomes" id="UP000008597">
    <property type="component" value="Segment"/>
</dbReference>
<dbReference type="GO" id="GO:0030246">
    <property type="term" value="F:carbohydrate binding"/>
    <property type="evidence" value="ECO:0007669"/>
    <property type="project" value="UniProtKB-KW"/>
</dbReference>
<dbReference type="Gene3D" id="3.10.100.10">
    <property type="entry name" value="Mannose-Binding Protein A, subunit A"/>
    <property type="match status" value="1"/>
</dbReference>
<dbReference type="InterPro" id="IPR016186">
    <property type="entry name" value="C-type_lectin-like/link_sf"/>
</dbReference>
<dbReference type="InterPro" id="IPR016187">
    <property type="entry name" value="CTDL_fold"/>
</dbReference>
<dbReference type="SUPFAM" id="SSF56436">
    <property type="entry name" value="C-type lectin-like"/>
    <property type="match status" value="1"/>
</dbReference>
<keyword id="KW-0430">Lectin</keyword>
<keyword id="KW-1185">Reference proteome</keyword>
<feature type="chain" id="PRO_0000046727" description="Putative C-type lectin protein FPV198">
    <location>
        <begin position="1"/>
        <end position="173"/>
    </location>
</feature>
<feature type="domain" description="C-type lectin">
    <location>
        <begin position="50"/>
        <end position="169"/>
    </location>
</feature>
<proteinExistence type="predicted"/>
<organism>
    <name type="scientific">Fowlpox virus (strain NVSL)</name>
    <name type="common">FPV</name>
    <dbReference type="NCBI Taxonomy" id="928301"/>
    <lineage>
        <taxon>Viruses</taxon>
        <taxon>Varidnaviria</taxon>
        <taxon>Bamfordvirae</taxon>
        <taxon>Nucleocytoviricota</taxon>
        <taxon>Pokkesviricetes</taxon>
        <taxon>Chitovirales</taxon>
        <taxon>Poxviridae</taxon>
        <taxon>Chordopoxvirinae</taxon>
        <taxon>Avipoxvirus</taxon>
        <taxon>Fowlpox virus</taxon>
    </lineage>
</organism>
<name>V198_FOWPN</name>
<protein>
    <recommendedName>
        <fullName>Putative C-type lectin protein FPV198</fullName>
    </recommendedName>
</protein>